<accession>Q681I0</accession>
<accession>O22280</accession>
<accession>O81463</accession>
<accession>Q500W6</accession>
<accession>Q709F3</accession>
<comment type="function">
    <text evidence="6">E3 ubiquitin-protein ligase. May participate in methylation-dependent transcriptional regulation. Mediates ubiquitination with the E2 ubiquitin-conjugating enzyme UBC11.</text>
</comment>
<comment type="catalytic activity">
    <reaction>
        <text>S-ubiquitinyl-[E2 ubiquitin-conjugating enzyme]-L-cysteine + [acceptor protein]-L-lysine = [E2 ubiquitin-conjugating enzyme]-L-cysteine + N(6)-ubiquitinyl-[acceptor protein]-L-lysine.</text>
        <dbReference type="EC" id="2.3.2.27"/>
    </reaction>
</comment>
<comment type="pathway">
    <text>Protein modification; protein ubiquitination.</text>
</comment>
<comment type="subcellular location">
    <subcellularLocation>
        <location evidence="4">Nucleus</location>
    </subcellularLocation>
    <subcellularLocation>
        <location evidence="8">Membrane</location>
        <topology evidence="8">Single-pass membrane protein</topology>
    </subcellularLocation>
</comment>
<comment type="alternative products">
    <event type="alternative splicing"/>
    <isoform>
        <id>Q681I0-1</id>
        <name>1</name>
        <sequence type="displayed"/>
    </isoform>
    <isoform>
        <id>Q681I0-2</id>
        <name>2</name>
        <sequence type="described" ref="VSP_039619"/>
    </isoform>
</comment>
<comment type="domain">
    <text evidence="1">The RING fingers are required for ubiquitin ligase activity.</text>
</comment>
<comment type="domain">
    <text evidence="1">The YDG domain mediates the interaction with histone H3.</text>
</comment>
<comment type="sequence caution" evidence="8">
    <conflict type="erroneous gene model prediction">
        <sequence resource="EMBL-CDS" id="AAB81879"/>
    </conflict>
</comment>
<comment type="sequence caution" evidence="8">
    <conflict type="erroneous gene model prediction">
        <sequence resource="EMBL-CDS" id="AAC28190"/>
    </conflict>
</comment>
<comment type="sequence caution" evidence="8">
    <conflict type="erroneous gene model prediction">
        <sequence resource="EMBL-CDS" id="CAB77984"/>
    </conflict>
</comment>
<proteinExistence type="evidence at transcript level"/>
<name>ORTHL_ARATH</name>
<keyword id="KW-0025">Alternative splicing</keyword>
<keyword id="KW-0156">Chromatin regulator</keyword>
<keyword id="KW-0238">DNA-binding</keyword>
<keyword id="KW-0472">Membrane</keyword>
<keyword id="KW-0479">Metal-binding</keyword>
<keyword id="KW-0539">Nucleus</keyword>
<keyword id="KW-1185">Reference proteome</keyword>
<keyword id="KW-0808">Transferase</keyword>
<keyword id="KW-0812">Transmembrane</keyword>
<keyword id="KW-1133">Transmembrane helix</keyword>
<keyword id="KW-0833">Ubl conjugation pathway</keyword>
<keyword id="KW-0862">Zinc</keyword>
<keyword id="KW-0863">Zinc-finger</keyword>
<gene>
    <name type="primary">ORTHL</name>
    <name type="synonym">ORL1</name>
    <name type="synonym">VIM6</name>
    <name type="ordered locus">At4g08590</name>
    <name type="ORF">T15F16.7</name>
    <name type="ORF">T3F12.10</name>
</gene>
<protein>
    <recommendedName>
        <fullName>E3 ubiquitin-protein ligase ORTHRUS-LIKE 1</fullName>
        <shortName>ORTH-LIKE 1</shortName>
        <ecNumber>2.3.2.27</ecNumber>
    </recommendedName>
    <alternativeName>
        <fullName>Protein VARIANT IN METHYLATION 6</fullName>
    </alternativeName>
    <alternativeName>
        <fullName evidence="8">RING-type E3 ubiquitin transferase ORTHRUS-LIKE 1</fullName>
    </alternativeName>
</protein>
<reference key="1">
    <citation type="journal article" date="1999" name="Nature">
        <title>Sequence and analysis of chromosome 4 of the plant Arabidopsis thaliana.</title>
        <authorList>
            <person name="Mayer K.F.X."/>
            <person name="Schueller C."/>
            <person name="Wambutt R."/>
            <person name="Murphy G."/>
            <person name="Volckaert G."/>
            <person name="Pohl T."/>
            <person name="Duesterhoeft A."/>
            <person name="Stiekema W."/>
            <person name="Entian K.-D."/>
            <person name="Terryn N."/>
            <person name="Harris B."/>
            <person name="Ansorge W."/>
            <person name="Brandt P."/>
            <person name="Grivell L.A."/>
            <person name="Rieger M."/>
            <person name="Weichselgartner M."/>
            <person name="de Simone V."/>
            <person name="Obermaier B."/>
            <person name="Mache R."/>
            <person name="Mueller M."/>
            <person name="Kreis M."/>
            <person name="Delseny M."/>
            <person name="Puigdomenech P."/>
            <person name="Watson M."/>
            <person name="Schmidtheini T."/>
            <person name="Reichert B."/>
            <person name="Portetelle D."/>
            <person name="Perez-Alonso M."/>
            <person name="Boutry M."/>
            <person name="Bancroft I."/>
            <person name="Vos P."/>
            <person name="Hoheisel J."/>
            <person name="Zimmermann W."/>
            <person name="Wedler H."/>
            <person name="Ridley P."/>
            <person name="Langham S.-A."/>
            <person name="McCullagh B."/>
            <person name="Bilham L."/>
            <person name="Robben J."/>
            <person name="van der Schueren J."/>
            <person name="Grymonprez B."/>
            <person name="Chuang Y.-J."/>
            <person name="Vandenbussche F."/>
            <person name="Braeken M."/>
            <person name="Weltjens I."/>
            <person name="Voet M."/>
            <person name="Bastiaens I."/>
            <person name="Aert R."/>
            <person name="Defoor E."/>
            <person name="Weitzenegger T."/>
            <person name="Bothe G."/>
            <person name="Ramsperger U."/>
            <person name="Hilbert H."/>
            <person name="Braun M."/>
            <person name="Holzer E."/>
            <person name="Brandt A."/>
            <person name="Peters S."/>
            <person name="van Staveren M."/>
            <person name="Dirkse W."/>
            <person name="Mooijman P."/>
            <person name="Klein Lankhorst R."/>
            <person name="Rose M."/>
            <person name="Hauf J."/>
            <person name="Koetter P."/>
            <person name="Berneiser S."/>
            <person name="Hempel S."/>
            <person name="Feldpausch M."/>
            <person name="Lamberth S."/>
            <person name="Van den Daele H."/>
            <person name="De Keyser A."/>
            <person name="Buysshaert C."/>
            <person name="Gielen J."/>
            <person name="Villarroel R."/>
            <person name="De Clercq R."/>
            <person name="van Montagu M."/>
            <person name="Rogers J."/>
            <person name="Cronin A."/>
            <person name="Quail M.A."/>
            <person name="Bray-Allen S."/>
            <person name="Clark L."/>
            <person name="Doggett J."/>
            <person name="Hall S."/>
            <person name="Kay M."/>
            <person name="Lennard N."/>
            <person name="McLay K."/>
            <person name="Mayes R."/>
            <person name="Pettett A."/>
            <person name="Rajandream M.A."/>
            <person name="Lyne M."/>
            <person name="Benes V."/>
            <person name="Rechmann S."/>
            <person name="Borkova D."/>
            <person name="Bloecker H."/>
            <person name="Scharfe M."/>
            <person name="Grimm M."/>
            <person name="Loehnert T.-H."/>
            <person name="Dose S."/>
            <person name="de Haan M."/>
            <person name="Maarse A.C."/>
            <person name="Schaefer M."/>
            <person name="Mueller-Auer S."/>
            <person name="Gabel C."/>
            <person name="Fuchs M."/>
            <person name="Fartmann B."/>
            <person name="Granderath K."/>
            <person name="Dauner D."/>
            <person name="Herzl A."/>
            <person name="Neumann S."/>
            <person name="Argiriou A."/>
            <person name="Vitale D."/>
            <person name="Liguori R."/>
            <person name="Piravandi E."/>
            <person name="Massenet O."/>
            <person name="Quigley F."/>
            <person name="Clabauld G."/>
            <person name="Muendlein A."/>
            <person name="Felber R."/>
            <person name="Schnabl S."/>
            <person name="Hiller R."/>
            <person name="Schmidt W."/>
            <person name="Lecharny A."/>
            <person name="Aubourg S."/>
            <person name="Chefdor F."/>
            <person name="Cooke R."/>
            <person name="Berger C."/>
            <person name="Monfort A."/>
            <person name="Casacuberta E."/>
            <person name="Gibbons T."/>
            <person name="Weber N."/>
            <person name="Vandenbol M."/>
            <person name="Bargues M."/>
            <person name="Terol J."/>
            <person name="Torres A."/>
            <person name="Perez-Perez A."/>
            <person name="Purnelle B."/>
            <person name="Bent E."/>
            <person name="Johnson S."/>
            <person name="Tacon D."/>
            <person name="Jesse T."/>
            <person name="Heijnen L."/>
            <person name="Schwarz S."/>
            <person name="Scholler P."/>
            <person name="Heber S."/>
            <person name="Francs P."/>
            <person name="Bielke C."/>
            <person name="Frishman D."/>
            <person name="Haase D."/>
            <person name="Lemcke K."/>
            <person name="Mewes H.-W."/>
            <person name="Stocker S."/>
            <person name="Zaccaria P."/>
            <person name="Bevan M."/>
            <person name="Wilson R.K."/>
            <person name="de la Bastide M."/>
            <person name="Habermann K."/>
            <person name="Parnell L."/>
            <person name="Dedhia N."/>
            <person name="Gnoj L."/>
            <person name="Schutz K."/>
            <person name="Huang E."/>
            <person name="Spiegel L."/>
            <person name="Sekhon M."/>
            <person name="Murray J."/>
            <person name="Sheet P."/>
            <person name="Cordes M."/>
            <person name="Abu-Threideh J."/>
            <person name="Stoneking T."/>
            <person name="Kalicki J."/>
            <person name="Graves T."/>
            <person name="Harmon G."/>
            <person name="Edwards J."/>
            <person name="Latreille P."/>
            <person name="Courtney L."/>
            <person name="Cloud J."/>
            <person name="Abbott A."/>
            <person name="Scott K."/>
            <person name="Johnson D."/>
            <person name="Minx P."/>
            <person name="Bentley D."/>
            <person name="Fulton B."/>
            <person name="Miller N."/>
            <person name="Greco T."/>
            <person name="Kemp K."/>
            <person name="Kramer J."/>
            <person name="Fulton L."/>
            <person name="Mardis E."/>
            <person name="Dante M."/>
            <person name="Pepin K."/>
            <person name="Hillier L.W."/>
            <person name="Nelson J."/>
            <person name="Spieth J."/>
            <person name="Ryan E."/>
            <person name="Andrews S."/>
            <person name="Geisel C."/>
            <person name="Layman D."/>
            <person name="Du H."/>
            <person name="Ali J."/>
            <person name="Berghoff A."/>
            <person name="Jones K."/>
            <person name="Drone K."/>
            <person name="Cotton M."/>
            <person name="Joshu C."/>
            <person name="Antonoiu B."/>
            <person name="Zidanic M."/>
            <person name="Strong C."/>
            <person name="Sun H."/>
            <person name="Lamar B."/>
            <person name="Yordan C."/>
            <person name="Ma P."/>
            <person name="Zhong J."/>
            <person name="Preston R."/>
            <person name="Vil D."/>
            <person name="Shekher M."/>
            <person name="Matero A."/>
            <person name="Shah R."/>
            <person name="Swaby I.K."/>
            <person name="O'Shaughnessy A."/>
            <person name="Rodriguez M."/>
            <person name="Hoffman J."/>
            <person name="Till S."/>
            <person name="Granat S."/>
            <person name="Shohdy N."/>
            <person name="Hasegawa A."/>
            <person name="Hameed A."/>
            <person name="Lodhi M."/>
            <person name="Johnson A."/>
            <person name="Chen E."/>
            <person name="Marra M.A."/>
            <person name="Martienssen R."/>
            <person name="McCombie W.R."/>
        </authorList>
    </citation>
    <scope>NUCLEOTIDE SEQUENCE [LARGE SCALE GENOMIC DNA]</scope>
    <source>
        <strain>cv. Columbia</strain>
    </source>
</reference>
<reference key="2">
    <citation type="journal article" date="2017" name="Plant J.">
        <title>Araport11: a complete reannotation of the Arabidopsis thaliana reference genome.</title>
        <authorList>
            <person name="Cheng C.Y."/>
            <person name="Krishnakumar V."/>
            <person name="Chan A.P."/>
            <person name="Thibaud-Nissen F."/>
            <person name="Schobel S."/>
            <person name="Town C.D."/>
        </authorList>
    </citation>
    <scope>GENOME REANNOTATION</scope>
    <source>
        <strain>cv. Columbia</strain>
    </source>
</reference>
<reference key="3">
    <citation type="submission" date="2004-09" db="EMBL/GenBank/DDBJ databases">
        <title>Large-scale analysis of RIKEN Arabidopsis full-length (RAFL) cDNAs.</title>
        <authorList>
            <person name="Totoki Y."/>
            <person name="Seki M."/>
            <person name="Ishida J."/>
            <person name="Nakajima M."/>
            <person name="Enju A."/>
            <person name="Kamiya A."/>
            <person name="Narusaka M."/>
            <person name="Shin-i T."/>
            <person name="Nakagawa M."/>
            <person name="Sakamoto N."/>
            <person name="Oishi K."/>
            <person name="Kohara Y."/>
            <person name="Kobayashi M."/>
            <person name="Toyoda A."/>
            <person name="Sakaki Y."/>
            <person name="Sakurai T."/>
            <person name="Iida K."/>
            <person name="Akiyama K."/>
            <person name="Satou M."/>
            <person name="Toyoda T."/>
            <person name="Konagaya A."/>
            <person name="Carninci P."/>
            <person name="Kawai J."/>
            <person name="Hayashizaki Y."/>
            <person name="Shinozaki K."/>
        </authorList>
    </citation>
    <scope>NUCLEOTIDE SEQUENCE [LARGE SCALE MRNA] (ISOFORM 1)</scope>
    <source>
        <strain>cv. Columbia</strain>
    </source>
</reference>
<reference key="4">
    <citation type="submission" date="2005-05" db="EMBL/GenBank/DDBJ databases">
        <title>Arabidopsis ORF clones.</title>
        <authorList>
            <person name="Shinn P."/>
            <person name="Chen H."/>
            <person name="Cheuk R.F."/>
            <person name="Kim C.J."/>
            <person name="Ecker J.R."/>
        </authorList>
    </citation>
    <scope>NUCLEOTIDE SEQUENCE [LARGE SCALE MRNA] (ISOFORM 2)</scope>
    <source>
        <strain>cv. Columbia</strain>
    </source>
</reference>
<reference key="5">
    <citation type="journal article" date="2004" name="Plant Physiol.">
        <title>The Arabidopsis genome sequence as a tool for genome analysis in the Brassicaceae: a comparison of the Arabidopsis thaliana and Capsella rubella genomes.</title>
        <authorList>
            <person name="Boivin K."/>
            <person name="Acarkan A."/>
            <person name="Mbulu R.S."/>
            <person name="Clarenz O."/>
            <person name="Schmidt R."/>
        </authorList>
    </citation>
    <scope>NUCLEOTIDE SEQUENCE [MRNA] OF 284-464 (ISOFORMS 1/2)</scope>
</reference>
<reference key="6">
    <citation type="journal article" date="2002" name="Genome Biol.">
        <title>Evaluation and classification of RING-finger domains encoded by the Arabidopsis genome.</title>
        <authorList>
            <person name="Kosarev P."/>
            <person name="Mayer K.F.X."/>
            <person name="Hardtke C.S."/>
        </authorList>
    </citation>
    <scope>GENE FAMILY ORGANIZATION</scope>
</reference>
<reference key="7">
    <citation type="journal article" date="2008" name="Plant J.">
        <title>ORTH/VIM proteins that regulate DNA methylation are functional ubiquitin E3 ligases.</title>
        <authorList>
            <person name="Kraft E."/>
            <person name="Bostick M."/>
            <person name="Jacobsen S.E."/>
            <person name="Callis J."/>
        </authorList>
    </citation>
    <scope>FUNCTION</scope>
    <scope>GENE FAMILY</scope>
    <scope>NOMENCLATURE</scope>
</reference>
<evidence type="ECO:0000250" key="1"/>
<evidence type="ECO:0000255" key="2"/>
<evidence type="ECO:0000255" key="3">
    <source>
        <dbReference type="PROSITE-ProRule" id="PRU00175"/>
    </source>
</evidence>
<evidence type="ECO:0000255" key="4">
    <source>
        <dbReference type="PROSITE-ProRule" id="PRU00358"/>
    </source>
</evidence>
<evidence type="ECO:0000256" key="5">
    <source>
        <dbReference type="SAM" id="MobiDB-lite"/>
    </source>
</evidence>
<evidence type="ECO:0000269" key="6">
    <source>
    </source>
</evidence>
<evidence type="ECO:0000303" key="7">
    <source ref="4"/>
</evidence>
<evidence type="ECO:0000305" key="8"/>
<organism>
    <name type="scientific">Arabidopsis thaliana</name>
    <name type="common">Mouse-ear cress</name>
    <dbReference type="NCBI Taxonomy" id="3702"/>
    <lineage>
        <taxon>Eukaryota</taxon>
        <taxon>Viridiplantae</taxon>
        <taxon>Streptophyta</taxon>
        <taxon>Embryophyta</taxon>
        <taxon>Tracheophyta</taxon>
        <taxon>Spermatophyta</taxon>
        <taxon>Magnoliopsida</taxon>
        <taxon>eudicotyledons</taxon>
        <taxon>Gunneridae</taxon>
        <taxon>Pentapetalae</taxon>
        <taxon>rosids</taxon>
        <taxon>malvids</taxon>
        <taxon>Brassicales</taxon>
        <taxon>Brassicaceae</taxon>
        <taxon>Camelineae</taxon>
        <taxon>Arabidopsis</taxon>
    </lineage>
</organism>
<feature type="chain" id="PRO_0000396830" description="E3 ubiquitin-protein ligase ORTHRUS-LIKE 1">
    <location>
        <begin position="1"/>
        <end position="465"/>
    </location>
</feature>
<feature type="transmembrane region" description="Helical" evidence="2">
    <location>
        <begin position="442"/>
        <end position="462"/>
    </location>
</feature>
<feature type="domain" description="YDG" evidence="4">
    <location>
        <begin position="233"/>
        <end position="374"/>
    </location>
</feature>
<feature type="zinc finger region" description="RING-type" evidence="3">
    <location>
        <begin position="109"/>
        <end position="148"/>
    </location>
</feature>
<feature type="region of interest" description="Disordered" evidence="5">
    <location>
        <begin position="31"/>
        <end position="69"/>
    </location>
</feature>
<feature type="splice variant" id="VSP_039619" description="In isoform 2." evidence="7">
    <location>
        <position position="296"/>
    </location>
</feature>
<sequence length="465" mass="52308">MTRVNQLPCDCVSTAEESLTSGTCITPTHVTSLSSPLDRSGDVDPLPVSDESGGSKADESMTDADETKKRKRILSGDCEADENNKSDGEIASLNDGVDAFTAICEDLNCSLCNQLPDRPVTILCGHNFCLKCFDKWIDQGNQICATCRSTIPDKMAANPRVNSSLVSVIRYVKVAKTAGVGTANFFPFTSNQDGPENAFRTKRAKIGEENAARIYVTVPFDHFGPIPAEHDPVRNQGVLVGESWENRVECRQWGVHLPHVSCIAGQEDYGAQSVVISGGYKDDEDHGEWFLYTGRSRGRHFANEDQEFEDLNEALRVSCEMGYPVRVVRSYKDRYSAYAPKEGVRYDGVYRIEKCWRKARFPDSFKVCRYLFVRCDNEPAPWNSDESGDRPRPLPNIPELETASDLFERKESPSWDFDEAEGRWRWMKPPPANHEQRERMKMAMTCLLLFVLIILVGSSSILYQY</sequence>
<dbReference type="EC" id="2.3.2.27"/>
<dbReference type="EMBL" id="AC002983">
    <property type="protein sequence ID" value="AAB81879.1"/>
    <property type="status" value="ALT_SEQ"/>
    <property type="molecule type" value="Genomic_DNA"/>
</dbReference>
<dbReference type="EMBL" id="AF076275">
    <property type="protein sequence ID" value="AAC28190.1"/>
    <property type="status" value="ALT_SEQ"/>
    <property type="molecule type" value="Genomic_DNA"/>
</dbReference>
<dbReference type="EMBL" id="AL161512">
    <property type="protein sequence ID" value="CAB77984.1"/>
    <property type="status" value="ALT_SEQ"/>
    <property type="molecule type" value="Genomic_DNA"/>
</dbReference>
<dbReference type="EMBL" id="CP002687">
    <property type="protein sequence ID" value="AEE82661.1"/>
    <property type="molecule type" value="Genomic_DNA"/>
</dbReference>
<dbReference type="EMBL" id="CP002687">
    <property type="protein sequence ID" value="AEE82662.1"/>
    <property type="molecule type" value="Genomic_DNA"/>
</dbReference>
<dbReference type="EMBL" id="AK175637">
    <property type="protein sequence ID" value="BAD43400.1"/>
    <property type="molecule type" value="mRNA"/>
</dbReference>
<dbReference type="EMBL" id="BT022101">
    <property type="protein sequence ID" value="AAY34162.1"/>
    <property type="molecule type" value="mRNA"/>
</dbReference>
<dbReference type="EMBL" id="AJ608275">
    <property type="protein sequence ID" value="CAE55215.1"/>
    <property type="molecule type" value="mRNA"/>
</dbReference>
<dbReference type="PIR" id="T00949">
    <property type="entry name" value="T00949"/>
</dbReference>
<dbReference type="PIR" id="T01825">
    <property type="entry name" value="T01825"/>
</dbReference>
<dbReference type="RefSeq" id="NP_001078357.1">
    <molecule id="Q681I0-2"/>
    <property type="nucleotide sequence ID" value="NM_001084888.1"/>
</dbReference>
<dbReference type="RefSeq" id="NP_192599.2">
    <molecule id="Q681I0-1"/>
    <property type="nucleotide sequence ID" value="NM_116928.4"/>
</dbReference>
<dbReference type="SMR" id="Q681I0"/>
<dbReference type="BioGRID" id="11720">
    <property type="interactions" value="1"/>
</dbReference>
<dbReference type="FunCoup" id="Q681I0">
    <property type="interactions" value="1739"/>
</dbReference>
<dbReference type="STRING" id="3702.Q681I0"/>
<dbReference type="GlyGen" id="Q681I0">
    <property type="glycosylation" value="1 site"/>
</dbReference>
<dbReference type="iPTMnet" id="Q681I0"/>
<dbReference type="PaxDb" id="3702-AT4G08590.1"/>
<dbReference type="ProteomicsDB" id="226034">
    <molecule id="Q681I0-1"/>
</dbReference>
<dbReference type="EnsemblPlants" id="AT4G08590.1">
    <molecule id="Q681I0-1"/>
    <property type="protein sequence ID" value="AT4G08590.1"/>
    <property type="gene ID" value="AT4G08590"/>
</dbReference>
<dbReference type="EnsemblPlants" id="AT4G08590.2">
    <molecule id="Q681I0-2"/>
    <property type="protein sequence ID" value="AT4G08590.2"/>
    <property type="gene ID" value="AT4G08590"/>
</dbReference>
<dbReference type="GeneID" id="826420"/>
<dbReference type="Gramene" id="AT4G08590.1">
    <molecule id="Q681I0-1"/>
    <property type="protein sequence ID" value="AT4G08590.1"/>
    <property type="gene ID" value="AT4G08590"/>
</dbReference>
<dbReference type="Gramene" id="AT4G08590.2">
    <molecule id="Q681I0-2"/>
    <property type="protein sequence ID" value="AT4G08590.2"/>
    <property type="gene ID" value="AT4G08590"/>
</dbReference>
<dbReference type="KEGG" id="ath:AT4G08590"/>
<dbReference type="Araport" id="AT4G08590"/>
<dbReference type="TAIR" id="AT4G08590">
    <property type="gene designation" value="ORTHL"/>
</dbReference>
<dbReference type="eggNOG" id="ENOG502QSQ8">
    <property type="taxonomic scope" value="Eukaryota"/>
</dbReference>
<dbReference type="HOGENOM" id="CLU_016281_1_0_1"/>
<dbReference type="InParanoid" id="Q681I0"/>
<dbReference type="OMA" id="MINNPRI"/>
<dbReference type="PhylomeDB" id="Q681I0"/>
<dbReference type="UniPathway" id="UPA00143"/>
<dbReference type="PRO" id="PR:Q681I0"/>
<dbReference type="Proteomes" id="UP000006548">
    <property type="component" value="Chromosome 4"/>
</dbReference>
<dbReference type="ExpressionAtlas" id="Q681I0">
    <property type="expression patterns" value="baseline and differential"/>
</dbReference>
<dbReference type="GO" id="GO:0005737">
    <property type="term" value="C:cytoplasm"/>
    <property type="evidence" value="ECO:0000314"/>
    <property type="project" value="TAIR"/>
</dbReference>
<dbReference type="GO" id="GO:0016020">
    <property type="term" value="C:membrane"/>
    <property type="evidence" value="ECO:0007669"/>
    <property type="project" value="UniProtKB-SubCell"/>
</dbReference>
<dbReference type="GO" id="GO:0005634">
    <property type="term" value="C:nucleus"/>
    <property type="evidence" value="ECO:0000250"/>
    <property type="project" value="UniProtKB"/>
</dbReference>
<dbReference type="GO" id="GO:0042393">
    <property type="term" value="F:histone binding"/>
    <property type="evidence" value="ECO:0000250"/>
    <property type="project" value="UniProtKB"/>
</dbReference>
<dbReference type="GO" id="GO:0008327">
    <property type="term" value="F:methyl-CpG binding"/>
    <property type="evidence" value="ECO:0000250"/>
    <property type="project" value="UniProtKB"/>
</dbReference>
<dbReference type="GO" id="GO:0010428">
    <property type="term" value="F:methyl-CpNpG binding"/>
    <property type="evidence" value="ECO:0000250"/>
    <property type="project" value="UniProtKB"/>
</dbReference>
<dbReference type="GO" id="GO:0010429">
    <property type="term" value="F:methyl-CpNpN binding"/>
    <property type="evidence" value="ECO:0000250"/>
    <property type="project" value="UniProtKB"/>
</dbReference>
<dbReference type="GO" id="GO:0004842">
    <property type="term" value="F:ubiquitin-protein transferase activity"/>
    <property type="evidence" value="ECO:0000314"/>
    <property type="project" value="TAIR"/>
</dbReference>
<dbReference type="GO" id="GO:0008270">
    <property type="term" value="F:zinc ion binding"/>
    <property type="evidence" value="ECO:0007669"/>
    <property type="project" value="UniProtKB-KW"/>
</dbReference>
<dbReference type="GO" id="GO:0006325">
    <property type="term" value="P:chromatin organization"/>
    <property type="evidence" value="ECO:0007669"/>
    <property type="project" value="UniProtKB-KW"/>
</dbReference>
<dbReference type="GO" id="GO:0016567">
    <property type="term" value="P:protein ubiquitination"/>
    <property type="evidence" value="ECO:0000314"/>
    <property type="project" value="TAIR"/>
</dbReference>
<dbReference type="CDD" id="cd23138">
    <property type="entry name" value="RING-HC_ORTHRUS_rpt1"/>
    <property type="match status" value="1"/>
</dbReference>
<dbReference type="FunFam" id="2.30.280.10:FF:000002">
    <property type="entry name" value="E3 ubiquitin-protein ligase ORTHRUS 2"/>
    <property type="match status" value="1"/>
</dbReference>
<dbReference type="Gene3D" id="2.30.280.10">
    <property type="entry name" value="SRA-YDG"/>
    <property type="match status" value="1"/>
</dbReference>
<dbReference type="Gene3D" id="3.30.40.10">
    <property type="entry name" value="Zinc/RING finger domain, C3HC4 (zinc finger)"/>
    <property type="match status" value="1"/>
</dbReference>
<dbReference type="InterPro" id="IPR015947">
    <property type="entry name" value="PUA-like_sf"/>
</dbReference>
<dbReference type="InterPro" id="IPR047498">
    <property type="entry name" value="RING-HC_ORTHRUS_rpt1"/>
</dbReference>
<dbReference type="InterPro" id="IPR036987">
    <property type="entry name" value="SRA-YDG_sf"/>
</dbReference>
<dbReference type="InterPro" id="IPR003105">
    <property type="entry name" value="SRA_YDG"/>
</dbReference>
<dbReference type="InterPro" id="IPR045134">
    <property type="entry name" value="UHRF1/2-like"/>
</dbReference>
<dbReference type="InterPro" id="IPR018957">
    <property type="entry name" value="Znf_C3HC4_RING-type"/>
</dbReference>
<dbReference type="InterPro" id="IPR001841">
    <property type="entry name" value="Znf_RING"/>
</dbReference>
<dbReference type="InterPro" id="IPR013083">
    <property type="entry name" value="Znf_RING/FYVE/PHD"/>
</dbReference>
<dbReference type="PANTHER" id="PTHR14140:SF46">
    <property type="entry name" value="E3 UBIQUITIN-PROTEIN LIGASE ORTHRUS 1-RELATED"/>
    <property type="match status" value="1"/>
</dbReference>
<dbReference type="PANTHER" id="PTHR14140">
    <property type="entry name" value="E3 UBIQUITIN-PROTEIN LIGASE UHRF-RELATED"/>
    <property type="match status" value="1"/>
</dbReference>
<dbReference type="Pfam" id="PF02182">
    <property type="entry name" value="SAD_SRA"/>
    <property type="match status" value="1"/>
</dbReference>
<dbReference type="Pfam" id="PF00097">
    <property type="entry name" value="zf-C3HC4"/>
    <property type="match status" value="1"/>
</dbReference>
<dbReference type="SMART" id="SM00184">
    <property type="entry name" value="RING"/>
    <property type="match status" value="1"/>
</dbReference>
<dbReference type="SMART" id="SM00466">
    <property type="entry name" value="SRA"/>
    <property type="match status" value="1"/>
</dbReference>
<dbReference type="SUPFAM" id="SSF88697">
    <property type="entry name" value="PUA domain-like"/>
    <property type="match status" value="1"/>
</dbReference>
<dbReference type="SUPFAM" id="SSF57850">
    <property type="entry name" value="RING/U-box"/>
    <property type="match status" value="1"/>
</dbReference>
<dbReference type="PROSITE" id="PS51015">
    <property type="entry name" value="YDG"/>
    <property type="match status" value="1"/>
</dbReference>
<dbReference type="PROSITE" id="PS50089">
    <property type="entry name" value="ZF_RING_2"/>
    <property type="match status" value="1"/>
</dbReference>